<dbReference type="EC" id="2.7.7.8" evidence="1"/>
<dbReference type="EMBL" id="CP000269">
    <property type="protein sequence ID" value="ABR88266.1"/>
    <property type="molecule type" value="Genomic_DNA"/>
</dbReference>
<dbReference type="RefSeq" id="WP_012079315.1">
    <property type="nucleotide sequence ID" value="NC_009659.1"/>
</dbReference>
<dbReference type="SMR" id="A6SY02"/>
<dbReference type="STRING" id="375286.mma_1459"/>
<dbReference type="KEGG" id="mms:mma_1459"/>
<dbReference type="eggNOG" id="COG1185">
    <property type="taxonomic scope" value="Bacteria"/>
</dbReference>
<dbReference type="HOGENOM" id="CLU_004217_2_2_4"/>
<dbReference type="OrthoDB" id="9804305at2"/>
<dbReference type="Proteomes" id="UP000006388">
    <property type="component" value="Chromosome"/>
</dbReference>
<dbReference type="GO" id="GO:0005829">
    <property type="term" value="C:cytosol"/>
    <property type="evidence" value="ECO:0007669"/>
    <property type="project" value="TreeGrafter"/>
</dbReference>
<dbReference type="GO" id="GO:0000175">
    <property type="term" value="F:3'-5'-RNA exonuclease activity"/>
    <property type="evidence" value="ECO:0007669"/>
    <property type="project" value="TreeGrafter"/>
</dbReference>
<dbReference type="GO" id="GO:0000287">
    <property type="term" value="F:magnesium ion binding"/>
    <property type="evidence" value="ECO:0007669"/>
    <property type="project" value="UniProtKB-UniRule"/>
</dbReference>
<dbReference type="GO" id="GO:0004654">
    <property type="term" value="F:polyribonucleotide nucleotidyltransferase activity"/>
    <property type="evidence" value="ECO:0007669"/>
    <property type="project" value="UniProtKB-UniRule"/>
</dbReference>
<dbReference type="GO" id="GO:0003723">
    <property type="term" value="F:RNA binding"/>
    <property type="evidence" value="ECO:0007669"/>
    <property type="project" value="UniProtKB-UniRule"/>
</dbReference>
<dbReference type="GO" id="GO:0006402">
    <property type="term" value="P:mRNA catabolic process"/>
    <property type="evidence" value="ECO:0007669"/>
    <property type="project" value="UniProtKB-UniRule"/>
</dbReference>
<dbReference type="GO" id="GO:0006396">
    <property type="term" value="P:RNA processing"/>
    <property type="evidence" value="ECO:0007669"/>
    <property type="project" value="InterPro"/>
</dbReference>
<dbReference type="CDD" id="cd02393">
    <property type="entry name" value="KH-I_PNPase"/>
    <property type="match status" value="1"/>
</dbReference>
<dbReference type="CDD" id="cd11363">
    <property type="entry name" value="RNase_PH_PNPase_1"/>
    <property type="match status" value="1"/>
</dbReference>
<dbReference type="CDD" id="cd11364">
    <property type="entry name" value="RNase_PH_PNPase_2"/>
    <property type="match status" value="1"/>
</dbReference>
<dbReference type="CDD" id="cd04472">
    <property type="entry name" value="S1_PNPase"/>
    <property type="match status" value="1"/>
</dbReference>
<dbReference type="FunFam" id="2.40.50.140:FF:000023">
    <property type="entry name" value="Polyribonucleotide nucleotidyltransferase"/>
    <property type="match status" value="1"/>
</dbReference>
<dbReference type="FunFam" id="3.30.1370.10:FF:000001">
    <property type="entry name" value="Polyribonucleotide nucleotidyltransferase"/>
    <property type="match status" value="1"/>
</dbReference>
<dbReference type="FunFam" id="3.30.230.70:FF:000001">
    <property type="entry name" value="Polyribonucleotide nucleotidyltransferase"/>
    <property type="match status" value="1"/>
</dbReference>
<dbReference type="FunFam" id="3.30.230.70:FF:000002">
    <property type="entry name" value="Polyribonucleotide nucleotidyltransferase"/>
    <property type="match status" value="1"/>
</dbReference>
<dbReference type="Gene3D" id="3.30.230.70">
    <property type="entry name" value="GHMP Kinase, N-terminal domain"/>
    <property type="match status" value="2"/>
</dbReference>
<dbReference type="Gene3D" id="3.30.1370.10">
    <property type="entry name" value="K Homology domain, type 1"/>
    <property type="match status" value="1"/>
</dbReference>
<dbReference type="Gene3D" id="2.40.50.140">
    <property type="entry name" value="Nucleic acid-binding proteins"/>
    <property type="match status" value="1"/>
</dbReference>
<dbReference type="HAMAP" id="MF_01595">
    <property type="entry name" value="PNPase"/>
    <property type="match status" value="1"/>
</dbReference>
<dbReference type="InterPro" id="IPR001247">
    <property type="entry name" value="ExoRNase_PH_dom1"/>
</dbReference>
<dbReference type="InterPro" id="IPR015847">
    <property type="entry name" value="ExoRNase_PH_dom2"/>
</dbReference>
<dbReference type="InterPro" id="IPR036345">
    <property type="entry name" value="ExoRNase_PH_dom2_sf"/>
</dbReference>
<dbReference type="InterPro" id="IPR004087">
    <property type="entry name" value="KH_dom"/>
</dbReference>
<dbReference type="InterPro" id="IPR004088">
    <property type="entry name" value="KH_dom_type_1"/>
</dbReference>
<dbReference type="InterPro" id="IPR036612">
    <property type="entry name" value="KH_dom_type_1_sf"/>
</dbReference>
<dbReference type="InterPro" id="IPR012340">
    <property type="entry name" value="NA-bd_OB-fold"/>
</dbReference>
<dbReference type="InterPro" id="IPR012162">
    <property type="entry name" value="PNPase"/>
</dbReference>
<dbReference type="InterPro" id="IPR027408">
    <property type="entry name" value="PNPase/RNase_PH_dom_sf"/>
</dbReference>
<dbReference type="InterPro" id="IPR015848">
    <property type="entry name" value="PNPase_PH_RNA-bd_bac/org-type"/>
</dbReference>
<dbReference type="InterPro" id="IPR036456">
    <property type="entry name" value="PNPase_PH_RNA-bd_sf"/>
</dbReference>
<dbReference type="InterPro" id="IPR020568">
    <property type="entry name" value="Ribosomal_Su5_D2-typ_SF"/>
</dbReference>
<dbReference type="InterPro" id="IPR003029">
    <property type="entry name" value="S1_domain"/>
</dbReference>
<dbReference type="NCBIfam" id="TIGR03591">
    <property type="entry name" value="polynuc_phos"/>
    <property type="match status" value="1"/>
</dbReference>
<dbReference type="NCBIfam" id="NF008805">
    <property type="entry name" value="PRK11824.1"/>
    <property type="match status" value="1"/>
</dbReference>
<dbReference type="PANTHER" id="PTHR11252">
    <property type="entry name" value="POLYRIBONUCLEOTIDE NUCLEOTIDYLTRANSFERASE"/>
    <property type="match status" value="1"/>
</dbReference>
<dbReference type="PANTHER" id="PTHR11252:SF0">
    <property type="entry name" value="POLYRIBONUCLEOTIDE NUCLEOTIDYLTRANSFERASE 1, MITOCHONDRIAL"/>
    <property type="match status" value="1"/>
</dbReference>
<dbReference type="Pfam" id="PF00013">
    <property type="entry name" value="KH_1"/>
    <property type="match status" value="1"/>
</dbReference>
<dbReference type="Pfam" id="PF03726">
    <property type="entry name" value="PNPase"/>
    <property type="match status" value="1"/>
</dbReference>
<dbReference type="Pfam" id="PF01138">
    <property type="entry name" value="RNase_PH"/>
    <property type="match status" value="2"/>
</dbReference>
<dbReference type="Pfam" id="PF03725">
    <property type="entry name" value="RNase_PH_C"/>
    <property type="match status" value="2"/>
</dbReference>
<dbReference type="Pfam" id="PF00575">
    <property type="entry name" value="S1"/>
    <property type="match status" value="1"/>
</dbReference>
<dbReference type="PIRSF" id="PIRSF005499">
    <property type="entry name" value="PNPase"/>
    <property type="match status" value="1"/>
</dbReference>
<dbReference type="SMART" id="SM00322">
    <property type="entry name" value="KH"/>
    <property type="match status" value="1"/>
</dbReference>
<dbReference type="SMART" id="SM00316">
    <property type="entry name" value="S1"/>
    <property type="match status" value="1"/>
</dbReference>
<dbReference type="SUPFAM" id="SSF54791">
    <property type="entry name" value="Eukaryotic type KH-domain (KH-domain type I)"/>
    <property type="match status" value="1"/>
</dbReference>
<dbReference type="SUPFAM" id="SSF50249">
    <property type="entry name" value="Nucleic acid-binding proteins"/>
    <property type="match status" value="1"/>
</dbReference>
<dbReference type="SUPFAM" id="SSF46915">
    <property type="entry name" value="Polynucleotide phosphorylase/guanosine pentaphosphate synthase (PNPase/GPSI), domain 3"/>
    <property type="match status" value="1"/>
</dbReference>
<dbReference type="SUPFAM" id="SSF55666">
    <property type="entry name" value="Ribonuclease PH domain 2-like"/>
    <property type="match status" value="2"/>
</dbReference>
<dbReference type="SUPFAM" id="SSF54211">
    <property type="entry name" value="Ribosomal protein S5 domain 2-like"/>
    <property type="match status" value="2"/>
</dbReference>
<dbReference type="PROSITE" id="PS50084">
    <property type="entry name" value="KH_TYPE_1"/>
    <property type="match status" value="1"/>
</dbReference>
<dbReference type="PROSITE" id="PS50126">
    <property type="entry name" value="S1"/>
    <property type="match status" value="1"/>
</dbReference>
<proteinExistence type="inferred from homology"/>
<keyword id="KW-0963">Cytoplasm</keyword>
<keyword id="KW-0460">Magnesium</keyword>
<keyword id="KW-0479">Metal-binding</keyword>
<keyword id="KW-0548">Nucleotidyltransferase</keyword>
<keyword id="KW-0694">RNA-binding</keyword>
<keyword id="KW-0808">Transferase</keyword>
<accession>A6SY02</accession>
<gene>
    <name evidence="1" type="primary">pnp</name>
    <name type="ordered locus">mma_1459</name>
</gene>
<evidence type="ECO:0000255" key="1">
    <source>
        <dbReference type="HAMAP-Rule" id="MF_01595"/>
    </source>
</evidence>
<feature type="chain" id="PRO_0000329685" description="Polyribonucleotide nucleotidyltransferase">
    <location>
        <begin position="1"/>
        <end position="711"/>
    </location>
</feature>
<feature type="domain" description="KH" evidence="1">
    <location>
        <begin position="559"/>
        <end position="618"/>
    </location>
</feature>
<feature type="domain" description="S1 motif" evidence="1">
    <location>
        <begin position="628"/>
        <end position="696"/>
    </location>
</feature>
<feature type="binding site" evidence="1">
    <location>
        <position position="491"/>
    </location>
    <ligand>
        <name>Mg(2+)</name>
        <dbReference type="ChEBI" id="CHEBI:18420"/>
    </ligand>
</feature>
<feature type="binding site" evidence="1">
    <location>
        <position position="497"/>
    </location>
    <ligand>
        <name>Mg(2+)</name>
        <dbReference type="ChEBI" id="CHEBI:18420"/>
    </ligand>
</feature>
<sequence length="711" mass="76156">MFNKVTKTFQYGQHQVTLETGEIARQASGAVLVSIEDTVVLATVVAKKDAKPGQDFFPLTVDYVEKTYAAGRIPGGFFKREGRPSEKETLTSRLIDRPIRPLFPEGYLNEVQIIIHVMSVNPEIDPDIAAMIGASAALSVAGIPFAGPVGAARVGYIDGQYVLNPTTSQLAKSDLDLVVAGTEIAVLMVESEAKQLSEEVMLGAVVFGHEQMKAVIDAIHDLVRDGGKPEVQWSPAPKNEALISRVAHFAEAKLRAAYQTKDKQARTTKLKDAFAEVNNELAAEAASIGAAAPDTAEVGNILFDLEAKIVRSQILEGEPRIDGRDTRTVRPITIRTGVLPRTHGSALFTRGETQALVIATLGTARDEQKIDALMGEYSDRFMLHYNMPPFATGETGRVGTPKRREIGHGRLAKRALVAALPAPEDFSYSVRLVSEITESNGSSSMASVCGGCLALMDAGVPMQSHVAGIAMGLIKEGSKFAVLTDILGDEDHLGDMDFKVAGTANGITALQMDIKIQGITKEIMQVALAQAKEGRVHILGEMEKAVPSGTTGELSDFAPRLITIKINPEKIRDVIGKGGAVIRALTEETGTQIDISDEGVVTIASVDAAAGQEAKRRIEELTASVEVGKIYEGTVLKLLDFGAIVQVMPGKDGLLHISQIANERVNAVADYLQEGQQVRVKVLETDDRGRLKLSMKAAVAEENPEPAAAQE</sequence>
<comment type="function">
    <text evidence="1">Involved in mRNA degradation. Catalyzes the phosphorolysis of single-stranded polyribonucleotides processively in the 3'- to 5'-direction.</text>
</comment>
<comment type="catalytic activity">
    <reaction evidence="1">
        <text>RNA(n+1) + phosphate = RNA(n) + a ribonucleoside 5'-diphosphate</text>
        <dbReference type="Rhea" id="RHEA:22096"/>
        <dbReference type="Rhea" id="RHEA-COMP:14527"/>
        <dbReference type="Rhea" id="RHEA-COMP:17342"/>
        <dbReference type="ChEBI" id="CHEBI:43474"/>
        <dbReference type="ChEBI" id="CHEBI:57930"/>
        <dbReference type="ChEBI" id="CHEBI:140395"/>
        <dbReference type="EC" id="2.7.7.8"/>
    </reaction>
</comment>
<comment type="cofactor">
    <cofactor evidence="1">
        <name>Mg(2+)</name>
        <dbReference type="ChEBI" id="CHEBI:18420"/>
    </cofactor>
</comment>
<comment type="subcellular location">
    <subcellularLocation>
        <location evidence="1">Cytoplasm</location>
    </subcellularLocation>
</comment>
<comment type="similarity">
    <text evidence="1">Belongs to the polyribonucleotide nucleotidyltransferase family.</text>
</comment>
<name>PNP_JANMA</name>
<organism>
    <name type="scientific">Janthinobacterium sp. (strain Marseille)</name>
    <name type="common">Minibacterium massiliensis</name>
    <dbReference type="NCBI Taxonomy" id="375286"/>
    <lineage>
        <taxon>Bacteria</taxon>
        <taxon>Pseudomonadati</taxon>
        <taxon>Pseudomonadota</taxon>
        <taxon>Betaproteobacteria</taxon>
        <taxon>Burkholderiales</taxon>
        <taxon>Oxalobacteraceae</taxon>
        <taxon>Janthinobacterium</taxon>
    </lineage>
</organism>
<protein>
    <recommendedName>
        <fullName evidence="1">Polyribonucleotide nucleotidyltransferase</fullName>
        <ecNumber evidence="1">2.7.7.8</ecNumber>
    </recommendedName>
    <alternativeName>
        <fullName evidence="1">Polynucleotide phosphorylase</fullName>
        <shortName evidence="1">PNPase</shortName>
    </alternativeName>
</protein>
<reference key="1">
    <citation type="journal article" date="2007" name="PLoS Genet.">
        <title>Genome analysis of Minibacterium massiliensis highlights the convergent evolution of water-living bacteria.</title>
        <authorList>
            <person name="Audic S."/>
            <person name="Robert C."/>
            <person name="Campagna B."/>
            <person name="Parinello H."/>
            <person name="Claverie J.-M."/>
            <person name="Raoult D."/>
            <person name="Drancourt M."/>
        </authorList>
    </citation>
    <scope>NUCLEOTIDE SEQUENCE [LARGE SCALE GENOMIC DNA]</scope>
    <source>
        <strain>Marseille</strain>
    </source>
</reference>